<sequence length="450" mass="49165">MASGAPQNSSQMACDGEIPGFLDTLLQDFPAPLSLESPLPWKVPGTVLGQEEVEAELTELAMGFLGSRNAPPAVAAAVTHEAISQLLQTDLSEFKRLPEQEEEEEEEEERVLTTLLDAKGLSRSFFNCLWEVCSQWQKRVPLTAQAPQRKWLVSIHAIRNTRRKMEDRHVSLPAFNHLFGLSDSVHRAYFAVFDGHGGVDAARYASVHVHTNASHQPELLTDPAAALKEAFRHTDQMFLQKAKRERLQSGTTGVCALITGAALHVAWLGDSQVILVQQGQVVKLMEPHKPERQDEKSRIEALGGFVSLMDCWRVNGTLAVSRAIGDVFQKPYVSGEADAASRELTGLEDYLLLACDGFFDVVPHHEIPGLVHGHLLRQKGSGMHVAEELVAVARDRGSHDNITVMVVFLRDPLELLEGGGQGAGGAQADVGSQDLSTGLSELEINTSQRS</sequence>
<accession>Q9WVR7</accession>
<evidence type="ECO:0000250" key="1"/>
<evidence type="ECO:0000250" key="2">
    <source>
        <dbReference type="UniProtKB" id="P49593"/>
    </source>
</evidence>
<evidence type="ECO:0000255" key="3">
    <source>
        <dbReference type="PROSITE-ProRule" id="PRU01082"/>
    </source>
</evidence>
<evidence type="ECO:0000256" key="4">
    <source>
        <dbReference type="SAM" id="MobiDB-lite"/>
    </source>
</evidence>
<evidence type="ECO:0000305" key="5"/>
<dbReference type="EC" id="3.1.3.16"/>
<dbReference type="EMBL" id="AB023634">
    <property type="protein sequence ID" value="BAA82477.1"/>
    <property type="molecule type" value="mRNA"/>
</dbReference>
<dbReference type="RefSeq" id="NP_786931.1">
    <property type="nucleotide sequence ID" value="NM_175755.2"/>
</dbReference>
<dbReference type="RefSeq" id="XP_006248736.1">
    <property type="nucleotide sequence ID" value="XM_006248674.4"/>
</dbReference>
<dbReference type="RefSeq" id="XP_038943992.1">
    <property type="nucleotide sequence ID" value="XM_039088064.2"/>
</dbReference>
<dbReference type="SMR" id="Q9WVR7"/>
<dbReference type="BioGRID" id="252383">
    <property type="interactions" value="1"/>
</dbReference>
<dbReference type="FunCoup" id="Q9WVR7">
    <property type="interactions" value="986"/>
</dbReference>
<dbReference type="IntAct" id="Q9WVR7">
    <property type="interactions" value="1"/>
</dbReference>
<dbReference type="MINT" id="Q9WVR7"/>
<dbReference type="STRING" id="10116.ENSRNOP00000002530"/>
<dbReference type="PhosphoSitePlus" id="Q9WVR7"/>
<dbReference type="jPOST" id="Q9WVR7"/>
<dbReference type="PaxDb" id="10116-ENSRNOP00000002530"/>
<dbReference type="Ensembl" id="ENSRNOT00000002530.6">
    <property type="protein sequence ID" value="ENSRNOP00000002530.3"/>
    <property type="gene ID" value="ENSRNOG00000037909.3"/>
</dbReference>
<dbReference type="GeneID" id="287931"/>
<dbReference type="KEGG" id="rno:287931"/>
<dbReference type="AGR" id="RGD:631363"/>
<dbReference type="CTD" id="9647"/>
<dbReference type="RGD" id="631363">
    <property type="gene designation" value="Ppm1f"/>
</dbReference>
<dbReference type="eggNOG" id="KOG0698">
    <property type="taxonomic scope" value="Eukaryota"/>
</dbReference>
<dbReference type="GeneTree" id="ENSGT00940000158884"/>
<dbReference type="HOGENOM" id="CLU_013173_15_0_1"/>
<dbReference type="InParanoid" id="Q9WVR7"/>
<dbReference type="OMA" id="DEMFLFK"/>
<dbReference type="OrthoDB" id="10264738at2759"/>
<dbReference type="PhylomeDB" id="Q9WVR7"/>
<dbReference type="TreeFam" id="TF317617"/>
<dbReference type="PRO" id="PR:Q9WVR7"/>
<dbReference type="Proteomes" id="UP000002494">
    <property type="component" value="Chromosome 11"/>
</dbReference>
<dbReference type="Bgee" id="ENSRNOG00000037909">
    <property type="expression patterns" value="Expressed in lung and 19 other cell types or tissues"/>
</dbReference>
<dbReference type="ExpressionAtlas" id="Q9WVR7">
    <property type="expression patterns" value="baseline and differential"/>
</dbReference>
<dbReference type="GO" id="GO:0005829">
    <property type="term" value="C:cytosol"/>
    <property type="evidence" value="ECO:0000314"/>
    <property type="project" value="UniProtKB"/>
</dbReference>
<dbReference type="GO" id="GO:0005634">
    <property type="term" value="C:nucleus"/>
    <property type="evidence" value="ECO:0000318"/>
    <property type="project" value="GO_Central"/>
</dbReference>
<dbReference type="GO" id="GO:0048471">
    <property type="term" value="C:perinuclear region of cytoplasm"/>
    <property type="evidence" value="ECO:0000314"/>
    <property type="project" value="UniProtKB"/>
</dbReference>
<dbReference type="GO" id="GO:0032991">
    <property type="term" value="C:protein-containing complex"/>
    <property type="evidence" value="ECO:0000250"/>
    <property type="project" value="UniProtKB"/>
</dbReference>
<dbReference type="GO" id="GO:0033192">
    <property type="term" value="F:calmodulin-dependent protein phosphatase activity"/>
    <property type="evidence" value="ECO:0000250"/>
    <property type="project" value="UniProtKB"/>
</dbReference>
<dbReference type="GO" id="GO:0046872">
    <property type="term" value="F:metal ion binding"/>
    <property type="evidence" value="ECO:0007669"/>
    <property type="project" value="UniProtKB-KW"/>
</dbReference>
<dbReference type="GO" id="GO:0004721">
    <property type="term" value="F:phosphoprotein phosphatase activity"/>
    <property type="evidence" value="ECO:0000314"/>
    <property type="project" value="RGD"/>
</dbReference>
<dbReference type="GO" id="GO:0004722">
    <property type="term" value="F:protein serine/threonine phosphatase activity"/>
    <property type="evidence" value="ECO:0000314"/>
    <property type="project" value="RGD"/>
</dbReference>
<dbReference type="GO" id="GO:0008138">
    <property type="term" value="F:protein tyrosine/serine/threonine phosphatase activity"/>
    <property type="evidence" value="ECO:0000266"/>
    <property type="project" value="RGD"/>
</dbReference>
<dbReference type="GO" id="GO:0006915">
    <property type="term" value="P:apoptotic process"/>
    <property type="evidence" value="ECO:0007669"/>
    <property type="project" value="UniProtKB-KW"/>
</dbReference>
<dbReference type="GO" id="GO:0071466">
    <property type="term" value="P:cellular response to xenobiotic stimulus"/>
    <property type="evidence" value="ECO:0000250"/>
    <property type="project" value="UniProtKB"/>
</dbReference>
<dbReference type="GO" id="GO:0035556">
    <property type="term" value="P:intracellular signal transduction"/>
    <property type="evidence" value="ECO:0000314"/>
    <property type="project" value="UniProtKB"/>
</dbReference>
<dbReference type="GO" id="GO:2000048">
    <property type="term" value="P:negative regulation of cell-cell adhesion mediated by cadherin"/>
    <property type="evidence" value="ECO:0000266"/>
    <property type="project" value="RGD"/>
</dbReference>
<dbReference type="GO" id="GO:0045892">
    <property type="term" value="P:negative regulation of DNA-templated transcription"/>
    <property type="evidence" value="ECO:0000250"/>
    <property type="project" value="UniProtKB"/>
</dbReference>
<dbReference type="GO" id="GO:0051224">
    <property type="term" value="P:negative regulation of protein transport"/>
    <property type="evidence" value="ECO:0000266"/>
    <property type="project" value="RGD"/>
</dbReference>
<dbReference type="GO" id="GO:0030335">
    <property type="term" value="P:positive regulation of cell migration"/>
    <property type="evidence" value="ECO:0000266"/>
    <property type="project" value="RGD"/>
</dbReference>
<dbReference type="GO" id="GO:0010811">
    <property type="term" value="P:positive regulation of cell-substrate adhesion"/>
    <property type="evidence" value="ECO:0000250"/>
    <property type="project" value="UniProtKB"/>
</dbReference>
<dbReference type="GO" id="GO:0050921">
    <property type="term" value="P:positive regulation of chemotaxis"/>
    <property type="evidence" value="ECO:0000250"/>
    <property type="project" value="UniProtKB"/>
</dbReference>
<dbReference type="GO" id="GO:0010634">
    <property type="term" value="P:positive regulation of epithelial cell migration"/>
    <property type="evidence" value="ECO:0000250"/>
    <property type="project" value="UniProtKB"/>
</dbReference>
<dbReference type="GO" id="GO:0051894">
    <property type="term" value="P:positive regulation of focal adhesion assembly"/>
    <property type="evidence" value="ECO:0000250"/>
    <property type="project" value="UniProtKB"/>
</dbReference>
<dbReference type="GO" id="GO:0010628">
    <property type="term" value="P:positive regulation of gene expression"/>
    <property type="evidence" value="ECO:0000250"/>
    <property type="project" value="UniProtKB"/>
</dbReference>
<dbReference type="GO" id="GO:0045927">
    <property type="term" value="P:positive regulation of growth"/>
    <property type="evidence" value="ECO:0000250"/>
    <property type="project" value="UniProtKB"/>
</dbReference>
<dbReference type="GO" id="GO:0051496">
    <property type="term" value="P:positive regulation of stress fiber assembly"/>
    <property type="evidence" value="ECO:0000266"/>
    <property type="project" value="RGD"/>
</dbReference>
<dbReference type="GO" id="GO:0032880">
    <property type="term" value="P:regulation of protein localization"/>
    <property type="evidence" value="ECO:0000266"/>
    <property type="project" value="RGD"/>
</dbReference>
<dbReference type="GO" id="GO:0007165">
    <property type="term" value="P:signal transduction"/>
    <property type="evidence" value="ECO:0000318"/>
    <property type="project" value="GO_Central"/>
</dbReference>
<dbReference type="CDD" id="cd00143">
    <property type="entry name" value="PP2Cc"/>
    <property type="match status" value="1"/>
</dbReference>
<dbReference type="FunFam" id="3.60.40.10:FF:000032">
    <property type="entry name" value="Protein phosphatase, Mg2+/Mn2+-dependent, 1F"/>
    <property type="match status" value="1"/>
</dbReference>
<dbReference type="Gene3D" id="3.60.40.10">
    <property type="entry name" value="PPM-type phosphatase domain"/>
    <property type="match status" value="1"/>
</dbReference>
<dbReference type="InterPro" id="IPR015655">
    <property type="entry name" value="PP2C"/>
</dbReference>
<dbReference type="InterPro" id="IPR000222">
    <property type="entry name" value="PP2C_BS"/>
</dbReference>
<dbReference type="InterPro" id="IPR036457">
    <property type="entry name" value="PPM-type-like_dom_sf"/>
</dbReference>
<dbReference type="InterPro" id="IPR001932">
    <property type="entry name" value="PPM-type_phosphatase-like_dom"/>
</dbReference>
<dbReference type="PANTHER" id="PTHR13832:SF233">
    <property type="entry name" value="PROTEIN PHOSPHATASE 1F"/>
    <property type="match status" value="1"/>
</dbReference>
<dbReference type="PANTHER" id="PTHR13832">
    <property type="entry name" value="PROTEIN PHOSPHATASE 2C"/>
    <property type="match status" value="1"/>
</dbReference>
<dbReference type="Pfam" id="PF00481">
    <property type="entry name" value="PP2C"/>
    <property type="match status" value="1"/>
</dbReference>
<dbReference type="SMART" id="SM00331">
    <property type="entry name" value="PP2C_SIG"/>
    <property type="match status" value="1"/>
</dbReference>
<dbReference type="SMART" id="SM00332">
    <property type="entry name" value="PP2Cc"/>
    <property type="match status" value="1"/>
</dbReference>
<dbReference type="SUPFAM" id="SSF81606">
    <property type="entry name" value="PP2C-like"/>
    <property type="match status" value="1"/>
</dbReference>
<dbReference type="PROSITE" id="PS01032">
    <property type="entry name" value="PPM_1"/>
    <property type="match status" value="1"/>
</dbReference>
<dbReference type="PROSITE" id="PS51746">
    <property type="entry name" value="PPM_2"/>
    <property type="match status" value="1"/>
</dbReference>
<keyword id="KW-0053">Apoptosis</keyword>
<keyword id="KW-0378">Hydrolase</keyword>
<keyword id="KW-0460">Magnesium</keyword>
<keyword id="KW-0464">Manganese</keyword>
<keyword id="KW-0479">Metal-binding</keyword>
<keyword id="KW-0597">Phosphoprotein</keyword>
<keyword id="KW-0904">Protein phosphatase</keyword>
<keyword id="KW-1185">Reference proteome</keyword>
<protein>
    <recommendedName>
        <fullName>Protein phosphatase 1F</fullName>
        <ecNumber>3.1.3.16</ecNumber>
    </recommendedName>
    <alternativeName>
        <fullName>Ca(2+)/calmodulin-dependent protein kinase phosphatase</fullName>
        <shortName>CaM-kinase phosphatase</shortName>
        <shortName>CaMKPase</shortName>
    </alternativeName>
    <alternativeName>
        <fullName>Partner of PIX 2</fullName>
    </alternativeName>
</protein>
<comment type="function">
    <text>Dephosphorylates and concomitantly deactivates CaM-kinase II activated upon autophosphorylation, and CaM-kinases IV and I activated upon phosphorylation by CaM-kinase kinase. Promotes apoptosis.</text>
</comment>
<comment type="catalytic activity">
    <reaction>
        <text>O-phospho-L-seryl-[protein] + H2O = L-seryl-[protein] + phosphate</text>
        <dbReference type="Rhea" id="RHEA:20629"/>
        <dbReference type="Rhea" id="RHEA-COMP:9863"/>
        <dbReference type="Rhea" id="RHEA-COMP:11604"/>
        <dbReference type="ChEBI" id="CHEBI:15377"/>
        <dbReference type="ChEBI" id="CHEBI:29999"/>
        <dbReference type="ChEBI" id="CHEBI:43474"/>
        <dbReference type="ChEBI" id="CHEBI:83421"/>
        <dbReference type="EC" id="3.1.3.16"/>
    </reaction>
</comment>
<comment type="catalytic activity">
    <reaction>
        <text>O-phospho-L-threonyl-[protein] + H2O = L-threonyl-[protein] + phosphate</text>
        <dbReference type="Rhea" id="RHEA:47004"/>
        <dbReference type="Rhea" id="RHEA-COMP:11060"/>
        <dbReference type="Rhea" id="RHEA-COMP:11605"/>
        <dbReference type="ChEBI" id="CHEBI:15377"/>
        <dbReference type="ChEBI" id="CHEBI:30013"/>
        <dbReference type="ChEBI" id="CHEBI:43474"/>
        <dbReference type="ChEBI" id="CHEBI:61977"/>
        <dbReference type="EC" id="3.1.3.16"/>
    </reaction>
</comment>
<comment type="cofactor">
    <cofactor evidence="1">
        <name>Mg(2+)</name>
        <dbReference type="ChEBI" id="CHEBI:18420"/>
    </cofactor>
    <cofactor evidence="1">
        <name>Mn(2+)</name>
        <dbReference type="ChEBI" id="CHEBI:29035"/>
    </cofactor>
    <text evidence="1">Binds 2 magnesium or manganese ions per subunit.</text>
</comment>
<comment type="subunit">
    <text evidence="1">Associates with FEM1B.</text>
</comment>
<comment type="similarity">
    <text evidence="5">Belongs to the PP2C family.</text>
</comment>
<reference key="1">
    <citation type="journal article" date="1999" name="J. Biochem.">
        <title>Molecular cloning of Ca2+/Calmodulin-dependent protein kinase phosphatase.</title>
        <authorList>
            <person name="Kitani T."/>
            <person name="Ishida A."/>
            <person name="Okuno S."/>
            <person name="Takeuchi M."/>
            <person name="Kameshita I."/>
            <person name="Fujisawa H."/>
        </authorList>
    </citation>
    <scope>NUCLEOTIDE SEQUENCE [MRNA]</scope>
    <source>
        <tissue>Brain</tissue>
    </source>
</reference>
<gene>
    <name type="primary">Ppm1f</name>
    <name type="synonym">Popx2</name>
</gene>
<proteinExistence type="evidence at transcript level"/>
<organism>
    <name type="scientific">Rattus norvegicus</name>
    <name type="common">Rat</name>
    <dbReference type="NCBI Taxonomy" id="10116"/>
    <lineage>
        <taxon>Eukaryota</taxon>
        <taxon>Metazoa</taxon>
        <taxon>Chordata</taxon>
        <taxon>Craniata</taxon>
        <taxon>Vertebrata</taxon>
        <taxon>Euteleostomi</taxon>
        <taxon>Mammalia</taxon>
        <taxon>Eutheria</taxon>
        <taxon>Euarchontoglires</taxon>
        <taxon>Glires</taxon>
        <taxon>Rodentia</taxon>
        <taxon>Myomorpha</taxon>
        <taxon>Muroidea</taxon>
        <taxon>Muridae</taxon>
        <taxon>Murinae</taxon>
        <taxon>Rattus</taxon>
    </lineage>
</organism>
<feature type="chain" id="PRO_0000057760" description="Protein phosphatase 1F">
    <location>
        <begin position="1"/>
        <end position="450"/>
    </location>
</feature>
<feature type="domain" description="PPM-type phosphatase" evidence="3">
    <location>
        <begin position="152"/>
        <end position="409"/>
    </location>
</feature>
<feature type="region of interest" description="Disordered" evidence="4">
    <location>
        <begin position="420"/>
        <end position="450"/>
    </location>
</feature>
<feature type="compositionally biased region" description="Polar residues" evidence="4">
    <location>
        <begin position="433"/>
        <end position="450"/>
    </location>
</feature>
<feature type="binding site" evidence="1">
    <location>
        <position position="194"/>
    </location>
    <ligand>
        <name>Mn(2+)</name>
        <dbReference type="ChEBI" id="CHEBI:29035"/>
        <label>1</label>
    </ligand>
</feature>
<feature type="binding site" evidence="1">
    <location>
        <position position="194"/>
    </location>
    <ligand>
        <name>Mn(2+)</name>
        <dbReference type="ChEBI" id="CHEBI:29035"/>
        <label>2</label>
    </ligand>
</feature>
<feature type="binding site" evidence="1">
    <location>
        <position position="195"/>
    </location>
    <ligand>
        <name>Mn(2+)</name>
        <dbReference type="ChEBI" id="CHEBI:29035"/>
        <label>1</label>
    </ligand>
</feature>
<feature type="binding site" evidence="1">
    <location>
        <position position="356"/>
    </location>
    <ligand>
        <name>Mn(2+)</name>
        <dbReference type="ChEBI" id="CHEBI:29035"/>
        <label>2</label>
    </ligand>
</feature>
<feature type="binding site" evidence="1">
    <location>
        <position position="400"/>
    </location>
    <ligand>
        <name>Mn(2+)</name>
        <dbReference type="ChEBI" id="CHEBI:29035"/>
        <label>2</label>
    </ligand>
</feature>
<feature type="modified residue" description="Phosphoserine" evidence="2">
    <location>
        <position position="450"/>
    </location>
</feature>
<name>PPM1F_RAT</name>